<proteinExistence type="evidence at transcript level"/>
<sequence>MALWRCSSSWLSSVSRSSGGVGGGESKVSPEIAPVSGGEGEGEEEEGEEERWSRLLPELLTEIMRRVDAGAERWPPRRDVVACACVCRRWRDAAVSVVRPPLECGRITFPSSLKQPGPRDAPMHCFIRRNKKNSTFYLYLSLTQALTDKGKFLLAARRFRNGAHTEYIISYDCDDLFPGSNSYVGKLRSDFLGTKFIIYDSQPPYDGAKPSRSQSSRRFASKQINPNVSGGNYEVGQVSYKFNFLKSRGPRRMQCNIQCPVGQSTASDPLKKLISTSSPLALRNKAPRWHEHLQCWCLNFHGRVTVASVKNFQLVAPAGTSDPWGIADEETVILQFGKIEDDAFTMDYRQPLSAFQAFAICLTSFGTKLACE</sequence>
<feature type="chain" id="PRO_0000351128" description="Tubby-like F-box protein 9">
    <location>
        <begin position="1"/>
        <end position="372"/>
    </location>
</feature>
<feature type="domain" description="F-box">
    <location>
        <begin position="50"/>
        <end position="105"/>
    </location>
</feature>
<feature type="region of interest" description="Disordered" evidence="1">
    <location>
        <begin position="1"/>
        <end position="51"/>
    </location>
</feature>
<feature type="compositionally biased region" description="Low complexity" evidence="1">
    <location>
        <begin position="7"/>
        <end position="18"/>
    </location>
</feature>
<feature type="compositionally biased region" description="Acidic residues" evidence="1">
    <location>
        <begin position="40"/>
        <end position="49"/>
    </location>
</feature>
<accession>Q68Y48</accession>
<accession>A3B5T6</accession>
<accession>B7E6U0</accession>
<dbReference type="EMBL" id="AC132485">
    <property type="protein sequence ID" value="AAU03104.1"/>
    <property type="molecule type" value="Genomic_DNA"/>
</dbReference>
<dbReference type="EMBL" id="AP008211">
    <property type="protein sequence ID" value="BAF17947.1"/>
    <property type="molecule type" value="Genomic_DNA"/>
</dbReference>
<dbReference type="EMBL" id="AP014961">
    <property type="protein sequence ID" value="BAS94873.1"/>
    <property type="molecule type" value="Genomic_DNA"/>
</dbReference>
<dbReference type="EMBL" id="CM000142">
    <property type="protein sequence ID" value="EEE64348.1"/>
    <property type="molecule type" value="Genomic_DNA"/>
</dbReference>
<dbReference type="EMBL" id="AK061747">
    <property type="protein sequence ID" value="BAG88087.1"/>
    <property type="molecule type" value="mRNA"/>
</dbReference>
<dbReference type="RefSeq" id="XP_015638758.1">
    <property type="nucleotide sequence ID" value="XM_015783272.1"/>
</dbReference>
<dbReference type="SMR" id="Q68Y48"/>
<dbReference type="FunCoup" id="Q68Y48">
    <property type="interactions" value="1517"/>
</dbReference>
<dbReference type="STRING" id="39947.Q68Y48"/>
<dbReference type="PaxDb" id="39947-Q68Y48"/>
<dbReference type="EnsemblPlants" id="Os05t0514300-01">
    <property type="protein sequence ID" value="Os05t0514300-01"/>
    <property type="gene ID" value="Os05g0514300"/>
</dbReference>
<dbReference type="EnsemblPlants" id="Os05t0514300-02">
    <property type="protein sequence ID" value="Os05t0514300-02"/>
    <property type="gene ID" value="Os05g0514300"/>
</dbReference>
<dbReference type="Gramene" id="Os05t0514300-01">
    <property type="protein sequence ID" value="Os05t0514300-01"/>
    <property type="gene ID" value="Os05g0514300"/>
</dbReference>
<dbReference type="Gramene" id="Os05t0514300-02">
    <property type="protein sequence ID" value="Os05t0514300-02"/>
    <property type="gene ID" value="Os05g0514300"/>
</dbReference>
<dbReference type="KEGG" id="dosa:Os05g0514300"/>
<dbReference type="eggNOG" id="KOG2502">
    <property type="taxonomic scope" value="Eukaryota"/>
</dbReference>
<dbReference type="HOGENOM" id="CLU_028236_3_0_1"/>
<dbReference type="InParanoid" id="Q68Y48"/>
<dbReference type="OMA" id="DCDDLFP"/>
<dbReference type="OrthoDB" id="8775810at2759"/>
<dbReference type="Proteomes" id="UP000000763">
    <property type="component" value="Chromosome 5"/>
</dbReference>
<dbReference type="Proteomes" id="UP000007752">
    <property type="component" value="Chromosome 5"/>
</dbReference>
<dbReference type="Proteomes" id="UP000059680">
    <property type="component" value="Chromosome 5"/>
</dbReference>
<dbReference type="Gene3D" id="1.20.1280.50">
    <property type="match status" value="1"/>
</dbReference>
<dbReference type="Gene3D" id="3.20.90.10">
    <property type="entry name" value="Tubby Protein, Chain A"/>
    <property type="match status" value="1"/>
</dbReference>
<dbReference type="InterPro" id="IPR036047">
    <property type="entry name" value="F-box-like_dom_sf"/>
</dbReference>
<dbReference type="InterPro" id="IPR025659">
    <property type="entry name" value="Tubby-like_C"/>
</dbReference>
<dbReference type="InterPro" id="IPR000007">
    <property type="entry name" value="Tubby_C"/>
</dbReference>
<dbReference type="InterPro" id="IPR018066">
    <property type="entry name" value="Tubby_C_CS"/>
</dbReference>
<dbReference type="PANTHER" id="PTHR16517:SF50">
    <property type="entry name" value="TUBBY-LIKE F-BOX PROTEIN 7"/>
    <property type="match status" value="1"/>
</dbReference>
<dbReference type="PANTHER" id="PTHR16517">
    <property type="entry name" value="TUBBY-RELATED"/>
    <property type="match status" value="1"/>
</dbReference>
<dbReference type="Pfam" id="PF01167">
    <property type="entry name" value="Tub"/>
    <property type="match status" value="1"/>
</dbReference>
<dbReference type="PRINTS" id="PR01573">
    <property type="entry name" value="SUPERTUBBY"/>
</dbReference>
<dbReference type="SUPFAM" id="SSF81383">
    <property type="entry name" value="F-box domain"/>
    <property type="match status" value="1"/>
</dbReference>
<dbReference type="SUPFAM" id="SSF54518">
    <property type="entry name" value="Tubby C-terminal domain-like"/>
    <property type="match status" value="1"/>
</dbReference>
<dbReference type="PROSITE" id="PS01200">
    <property type="entry name" value="TUB_1"/>
    <property type="match status" value="1"/>
</dbReference>
<dbReference type="PROSITE" id="PS01201">
    <property type="entry name" value="TUB_2"/>
    <property type="match status" value="1"/>
</dbReference>
<keyword id="KW-1185">Reference proteome</keyword>
<organism>
    <name type="scientific">Oryza sativa subsp. japonica</name>
    <name type="common">Rice</name>
    <dbReference type="NCBI Taxonomy" id="39947"/>
    <lineage>
        <taxon>Eukaryota</taxon>
        <taxon>Viridiplantae</taxon>
        <taxon>Streptophyta</taxon>
        <taxon>Embryophyta</taxon>
        <taxon>Tracheophyta</taxon>
        <taxon>Spermatophyta</taxon>
        <taxon>Magnoliopsida</taxon>
        <taxon>Liliopsida</taxon>
        <taxon>Poales</taxon>
        <taxon>Poaceae</taxon>
        <taxon>BOP clade</taxon>
        <taxon>Oryzoideae</taxon>
        <taxon>Oryzeae</taxon>
        <taxon>Oryzinae</taxon>
        <taxon>Oryza</taxon>
        <taxon>Oryza sativa</taxon>
    </lineage>
</organism>
<gene>
    <name type="primary">TULP9</name>
    <name type="synonym">TULP10</name>
    <name type="ordered locus">Os05g0514300</name>
    <name type="ordered locus">LOC_Os05g43850</name>
    <name type="ORF">OsJ_018408</name>
    <name evidence="4" type="ORF">OsJ_19188</name>
    <name type="ORF">P0022D06.6</name>
</gene>
<reference key="1">
    <citation type="journal article" date="2005" name="Mol. Genet. Genomics">
        <title>A fine physical map of the rice chromosome 5.</title>
        <authorList>
            <person name="Cheng C.-H."/>
            <person name="Chung M.C."/>
            <person name="Liu S.-M."/>
            <person name="Chen S.-K."/>
            <person name="Kao F.Y."/>
            <person name="Lin S.-J."/>
            <person name="Hsiao S.-H."/>
            <person name="Tseng I.C."/>
            <person name="Hsing Y.-I.C."/>
            <person name="Wu H.-P."/>
            <person name="Chen C.-S."/>
            <person name="Shaw J.-F."/>
            <person name="Wu J."/>
            <person name="Matsumoto T."/>
            <person name="Sasaki T."/>
            <person name="Chen H.-C."/>
            <person name="Chow T.-Y."/>
        </authorList>
    </citation>
    <scope>NUCLEOTIDE SEQUENCE [LARGE SCALE GENOMIC DNA]</scope>
    <source>
        <strain>cv. Nipponbare</strain>
    </source>
</reference>
<reference key="2">
    <citation type="journal article" date="2005" name="Nature">
        <title>The map-based sequence of the rice genome.</title>
        <authorList>
            <consortium name="International rice genome sequencing project (IRGSP)"/>
        </authorList>
    </citation>
    <scope>NUCLEOTIDE SEQUENCE [LARGE SCALE GENOMIC DNA]</scope>
    <source>
        <strain>cv. Nipponbare</strain>
    </source>
</reference>
<reference key="3">
    <citation type="journal article" date="2008" name="Nucleic Acids Res.">
        <title>The rice annotation project database (RAP-DB): 2008 update.</title>
        <authorList>
            <consortium name="The rice annotation project (RAP)"/>
        </authorList>
    </citation>
    <scope>GENOME REANNOTATION</scope>
    <source>
        <strain>cv. Nipponbare</strain>
    </source>
</reference>
<reference key="4">
    <citation type="journal article" date="2013" name="Rice">
        <title>Improvement of the Oryza sativa Nipponbare reference genome using next generation sequence and optical map data.</title>
        <authorList>
            <person name="Kawahara Y."/>
            <person name="de la Bastide M."/>
            <person name="Hamilton J.P."/>
            <person name="Kanamori H."/>
            <person name="McCombie W.R."/>
            <person name="Ouyang S."/>
            <person name="Schwartz D.C."/>
            <person name="Tanaka T."/>
            <person name="Wu J."/>
            <person name="Zhou S."/>
            <person name="Childs K.L."/>
            <person name="Davidson R.M."/>
            <person name="Lin H."/>
            <person name="Quesada-Ocampo L."/>
            <person name="Vaillancourt B."/>
            <person name="Sakai H."/>
            <person name="Lee S.S."/>
            <person name="Kim J."/>
            <person name="Numa H."/>
            <person name="Itoh T."/>
            <person name="Buell C.R."/>
            <person name="Matsumoto T."/>
        </authorList>
    </citation>
    <scope>GENOME REANNOTATION</scope>
    <source>
        <strain>cv. Nipponbare</strain>
    </source>
</reference>
<reference key="5">
    <citation type="journal article" date="2005" name="PLoS Biol.">
        <title>The genomes of Oryza sativa: a history of duplications.</title>
        <authorList>
            <person name="Yu J."/>
            <person name="Wang J."/>
            <person name="Lin W."/>
            <person name="Li S."/>
            <person name="Li H."/>
            <person name="Zhou J."/>
            <person name="Ni P."/>
            <person name="Dong W."/>
            <person name="Hu S."/>
            <person name="Zeng C."/>
            <person name="Zhang J."/>
            <person name="Zhang Y."/>
            <person name="Li R."/>
            <person name="Xu Z."/>
            <person name="Li S."/>
            <person name="Li X."/>
            <person name="Zheng H."/>
            <person name="Cong L."/>
            <person name="Lin L."/>
            <person name="Yin J."/>
            <person name="Geng J."/>
            <person name="Li G."/>
            <person name="Shi J."/>
            <person name="Liu J."/>
            <person name="Lv H."/>
            <person name="Li J."/>
            <person name="Wang J."/>
            <person name="Deng Y."/>
            <person name="Ran L."/>
            <person name="Shi X."/>
            <person name="Wang X."/>
            <person name="Wu Q."/>
            <person name="Li C."/>
            <person name="Ren X."/>
            <person name="Wang J."/>
            <person name="Wang X."/>
            <person name="Li D."/>
            <person name="Liu D."/>
            <person name="Zhang X."/>
            <person name="Ji Z."/>
            <person name="Zhao W."/>
            <person name="Sun Y."/>
            <person name="Zhang Z."/>
            <person name="Bao J."/>
            <person name="Han Y."/>
            <person name="Dong L."/>
            <person name="Ji J."/>
            <person name="Chen P."/>
            <person name="Wu S."/>
            <person name="Liu J."/>
            <person name="Xiao Y."/>
            <person name="Bu D."/>
            <person name="Tan J."/>
            <person name="Yang L."/>
            <person name="Ye C."/>
            <person name="Zhang J."/>
            <person name="Xu J."/>
            <person name="Zhou Y."/>
            <person name="Yu Y."/>
            <person name="Zhang B."/>
            <person name="Zhuang S."/>
            <person name="Wei H."/>
            <person name="Liu B."/>
            <person name="Lei M."/>
            <person name="Yu H."/>
            <person name="Li Y."/>
            <person name="Xu H."/>
            <person name="Wei S."/>
            <person name="He X."/>
            <person name="Fang L."/>
            <person name="Zhang Z."/>
            <person name="Zhang Y."/>
            <person name="Huang X."/>
            <person name="Su Z."/>
            <person name="Tong W."/>
            <person name="Li J."/>
            <person name="Tong Z."/>
            <person name="Li S."/>
            <person name="Ye J."/>
            <person name="Wang L."/>
            <person name="Fang L."/>
            <person name="Lei T."/>
            <person name="Chen C.-S."/>
            <person name="Chen H.-C."/>
            <person name="Xu Z."/>
            <person name="Li H."/>
            <person name="Huang H."/>
            <person name="Zhang F."/>
            <person name="Xu H."/>
            <person name="Li N."/>
            <person name="Zhao C."/>
            <person name="Li S."/>
            <person name="Dong L."/>
            <person name="Huang Y."/>
            <person name="Li L."/>
            <person name="Xi Y."/>
            <person name="Qi Q."/>
            <person name="Li W."/>
            <person name="Zhang B."/>
            <person name="Hu W."/>
            <person name="Zhang Y."/>
            <person name="Tian X."/>
            <person name="Jiao Y."/>
            <person name="Liang X."/>
            <person name="Jin J."/>
            <person name="Gao L."/>
            <person name="Zheng W."/>
            <person name="Hao B."/>
            <person name="Liu S.-M."/>
            <person name="Wang W."/>
            <person name="Yuan L."/>
            <person name="Cao M."/>
            <person name="McDermott J."/>
            <person name="Samudrala R."/>
            <person name="Wang J."/>
            <person name="Wong G.K.-S."/>
            <person name="Yang H."/>
        </authorList>
    </citation>
    <scope>NUCLEOTIDE SEQUENCE [LARGE SCALE GENOMIC DNA]</scope>
    <source>
        <strain>cv. Nipponbare</strain>
    </source>
</reference>
<reference key="6">
    <citation type="journal article" date="2003" name="Science">
        <title>Collection, mapping, and annotation of over 28,000 cDNA clones from japonica rice.</title>
        <authorList>
            <consortium name="The rice full-length cDNA consortium"/>
        </authorList>
    </citation>
    <scope>NUCLEOTIDE SEQUENCE [LARGE SCALE MRNA]</scope>
    <source>
        <strain>cv. Nipponbare</strain>
    </source>
</reference>
<reference key="7">
    <citation type="journal article" date="2008" name="FEBS J.">
        <title>Identification of rice TUBBY-like genes and their evolution.</title>
        <authorList>
            <person name="Liu Q."/>
        </authorList>
    </citation>
    <scope>GENE FAMILY</scope>
    <scope>NOMENCLATURE</scope>
</reference>
<reference key="8">
    <citation type="journal article" date="2008" name="Genomics">
        <title>Genomewide comparative phylogenetic and molecular evolutionary analysis of tubby-like protein family in Arabidopsis, rice, and poplar.</title>
        <authorList>
            <person name="Yang Z."/>
            <person name="Zhou Y."/>
            <person name="Wang X."/>
            <person name="Gu S."/>
            <person name="Yu J."/>
            <person name="Liang G."/>
            <person name="Yan C."/>
            <person name="Xu C."/>
        </authorList>
    </citation>
    <scope>TISSUE SPECIFICITY</scope>
    <scope>GENE FAMILY</scope>
    <scope>NOMENCLATURE</scope>
</reference>
<protein>
    <recommendedName>
        <fullName>Tubby-like F-box protein 9</fullName>
        <shortName>OsTLP9</shortName>
    </recommendedName>
    <alternativeName>
        <fullName>Tubby-like F-box protein 10</fullName>
        <shortName>OsTLP10</shortName>
    </alternativeName>
</protein>
<evidence type="ECO:0000256" key="1">
    <source>
        <dbReference type="SAM" id="MobiDB-lite"/>
    </source>
</evidence>
<evidence type="ECO:0000269" key="2">
    <source>
    </source>
</evidence>
<evidence type="ECO:0000305" key="3"/>
<evidence type="ECO:0000312" key="4">
    <source>
        <dbReference type="EMBL" id="EEE64348.1"/>
    </source>
</evidence>
<comment type="tissue specificity">
    <text evidence="2">Ubiquitous.</text>
</comment>
<comment type="similarity">
    <text evidence="3">Belongs to the TUB family.</text>
</comment>
<name>TLP9_ORYSJ</name>